<evidence type="ECO:0000255" key="1">
    <source>
        <dbReference type="HAMAP-Rule" id="MF_00204"/>
    </source>
</evidence>
<reference key="1">
    <citation type="journal article" date="2008" name="Infect. Immun.">
        <title>Genome of Mycoplasma arthritidis.</title>
        <authorList>
            <person name="Dybvig K."/>
            <person name="Zuhua C."/>
            <person name="Lao P."/>
            <person name="Jordan D.S."/>
            <person name="French C.T."/>
            <person name="Tu A.H."/>
            <person name="Loraine A.E."/>
        </authorList>
    </citation>
    <scope>NUCLEOTIDE SEQUENCE [LARGE SCALE GENOMIC DNA]</scope>
    <source>
        <strain>158L3-1</strain>
    </source>
</reference>
<gene>
    <name evidence="1" type="primary">uvrB</name>
    <name type="ordered locus">MARTH_orf076</name>
</gene>
<protein>
    <recommendedName>
        <fullName evidence="1">UvrABC system protein B</fullName>
        <shortName evidence="1">Protein UvrB</shortName>
    </recommendedName>
    <alternativeName>
        <fullName evidence="1">Excinuclease ABC subunit B</fullName>
    </alternativeName>
</protein>
<name>UVRB_META1</name>
<dbReference type="EMBL" id="CP001047">
    <property type="protein sequence ID" value="ACF07031.1"/>
    <property type="molecule type" value="Genomic_DNA"/>
</dbReference>
<dbReference type="RefSeq" id="WP_012497988.1">
    <property type="nucleotide sequence ID" value="NC_011025.1"/>
</dbReference>
<dbReference type="SMR" id="B3PLX9"/>
<dbReference type="STRING" id="243272.MARTH_orf076"/>
<dbReference type="KEGG" id="mat:MARTH_orf076"/>
<dbReference type="eggNOG" id="COG0556">
    <property type="taxonomic scope" value="Bacteria"/>
</dbReference>
<dbReference type="HOGENOM" id="CLU_009621_2_1_14"/>
<dbReference type="Proteomes" id="UP000008812">
    <property type="component" value="Chromosome"/>
</dbReference>
<dbReference type="GO" id="GO:0005737">
    <property type="term" value="C:cytoplasm"/>
    <property type="evidence" value="ECO:0007669"/>
    <property type="project" value="UniProtKB-SubCell"/>
</dbReference>
<dbReference type="GO" id="GO:0009380">
    <property type="term" value="C:excinuclease repair complex"/>
    <property type="evidence" value="ECO:0007669"/>
    <property type="project" value="InterPro"/>
</dbReference>
<dbReference type="GO" id="GO:0005524">
    <property type="term" value="F:ATP binding"/>
    <property type="evidence" value="ECO:0007669"/>
    <property type="project" value="UniProtKB-UniRule"/>
</dbReference>
<dbReference type="GO" id="GO:0016887">
    <property type="term" value="F:ATP hydrolysis activity"/>
    <property type="evidence" value="ECO:0007669"/>
    <property type="project" value="InterPro"/>
</dbReference>
<dbReference type="GO" id="GO:0003677">
    <property type="term" value="F:DNA binding"/>
    <property type="evidence" value="ECO:0007669"/>
    <property type="project" value="UniProtKB-UniRule"/>
</dbReference>
<dbReference type="GO" id="GO:0009381">
    <property type="term" value="F:excinuclease ABC activity"/>
    <property type="evidence" value="ECO:0007669"/>
    <property type="project" value="UniProtKB-UniRule"/>
</dbReference>
<dbReference type="GO" id="GO:0004386">
    <property type="term" value="F:helicase activity"/>
    <property type="evidence" value="ECO:0007669"/>
    <property type="project" value="UniProtKB-KW"/>
</dbReference>
<dbReference type="GO" id="GO:0006289">
    <property type="term" value="P:nucleotide-excision repair"/>
    <property type="evidence" value="ECO:0007669"/>
    <property type="project" value="UniProtKB-UniRule"/>
</dbReference>
<dbReference type="GO" id="GO:0009432">
    <property type="term" value="P:SOS response"/>
    <property type="evidence" value="ECO:0007669"/>
    <property type="project" value="UniProtKB-UniRule"/>
</dbReference>
<dbReference type="CDD" id="cd17916">
    <property type="entry name" value="DEXHc_UvrB"/>
    <property type="match status" value="1"/>
</dbReference>
<dbReference type="Gene3D" id="3.40.50.300">
    <property type="entry name" value="P-loop containing nucleotide triphosphate hydrolases"/>
    <property type="match status" value="3"/>
</dbReference>
<dbReference type="HAMAP" id="MF_00204">
    <property type="entry name" value="UvrB"/>
    <property type="match status" value="1"/>
</dbReference>
<dbReference type="InterPro" id="IPR006935">
    <property type="entry name" value="Helicase/UvrB_N"/>
</dbReference>
<dbReference type="InterPro" id="IPR014001">
    <property type="entry name" value="Helicase_ATP-bd"/>
</dbReference>
<dbReference type="InterPro" id="IPR001650">
    <property type="entry name" value="Helicase_C-like"/>
</dbReference>
<dbReference type="InterPro" id="IPR027417">
    <property type="entry name" value="P-loop_NTPase"/>
</dbReference>
<dbReference type="InterPro" id="IPR001943">
    <property type="entry name" value="UVR_dom"/>
</dbReference>
<dbReference type="InterPro" id="IPR036876">
    <property type="entry name" value="UVR_dom_sf"/>
</dbReference>
<dbReference type="InterPro" id="IPR004807">
    <property type="entry name" value="UvrB"/>
</dbReference>
<dbReference type="InterPro" id="IPR041471">
    <property type="entry name" value="UvrB_inter"/>
</dbReference>
<dbReference type="InterPro" id="IPR024759">
    <property type="entry name" value="UvrB_YAD/RRR_dom"/>
</dbReference>
<dbReference type="NCBIfam" id="NF003673">
    <property type="entry name" value="PRK05298.1"/>
    <property type="match status" value="1"/>
</dbReference>
<dbReference type="NCBIfam" id="TIGR00631">
    <property type="entry name" value="uvrb"/>
    <property type="match status" value="1"/>
</dbReference>
<dbReference type="PANTHER" id="PTHR24029">
    <property type="entry name" value="UVRABC SYSTEM PROTEIN B"/>
    <property type="match status" value="1"/>
</dbReference>
<dbReference type="PANTHER" id="PTHR24029:SF0">
    <property type="entry name" value="UVRABC SYSTEM PROTEIN B"/>
    <property type="match status" value="1"/>
</dbReference>
<dbReference type="Pfam" id="PF00271">
    <property type="entry name" value="Helicase_C"/>
    <property type="match status" value="1"/>
</dbReference>
<dbReference type="Pfam" id="PF04851">
    <property type="entry name" value="ResIII"/>
    <property type="match status" value="1"/>
</dbReference>
<dbReference type="Pfam" id="PF02151">
    <property type="entry name" value="UVR"/>
    <property type="match status" value="1"/>
</dbReference>
<dbReference type="Pfam" id="PF12344">
    <property type="entry name" value="UvrB"/>
    <property type="match status" value="1"/>
</dbReference>
<dbReference type="Pfam" id="PF17757">
    <property type="entry name" value="UvrB_inter"/>
    <property type="match status" value="1"/>
</dbReference>
<dbReference type="SMART" id="SM00487">
    <property type="entry name" value="DEXDc"/>
    <property type="match status" value="1"/>
</dbReference>
<dbReference type="SMART" id="SM00490">
    <property type="entry name" value="HELICc"/>
    <property type="match status" value="1"/>
</dbReference>
<dbReference type="SUPFAM" id="SSF46600">
    <property type="entry name" value="C-terminal UvrC-binding domain of UvrB"/>
    <property type="match status" value="1"/>
</dbReference>
<dbReference type="SUPFAM" id="SSF52540">
    <property type="entry name" value="P-loop containing nucleoside triphosphate hydrolases"/>
    <property type="match status" value="2"/>
</dbReference>
<dbReference type="PROSITE" id="PS51192">
    <property type="entry name" value="HELICASE_ATP_BIND_1"/>
    <property type="match status" value="1"/>
</dbReference>
<dbReference type="PROSITE" id="PS51194">
    <property type="entry name" value="HELICASE_CTER"/>
    <property type="match status" value="1"/>
</dbReference>
<dbReference type="PROSITE" id="PS50151">
    <property type="entry name" value="UVR"/>
    <property type="match status" value="1"/>
</dbReference>
<proteinExistence type="inferred from homology"/>
<comment type="function">
    <text evidence="1">The UvrABC repair system catalyzes the recognition and processing of DNA lesions. A damage recognition complex composed of 2 UvrA and 2 UvrB subunits scans DNA for abnormalities. Upon binding of the UvrA(2)B(2) complex to a putative damaged site, the DNA wraps around one UvrB monomer. DNA wrap is dependent on ATP binding by UvrB and probably causes local melting of the DNA helix, facilitating insertion of UvrB beta-hairpin between the DNA strands. Then UvrB probes one DNA strand for the presence of a lesion. If a lesion is found the UvrA subunits dissociate and the UvrB-DNA preincision complex is formed. This complex is subsequently bound by UvrC and the second UvrB is released. If no lesion is found, the DNA wraps around the other UvrB subunit that will check the other stand for damage.</text>
</comment>
<comment type="subunit">
    <text evidence="1">Forms a heterotetramer with UvrA during the search for lesions. Interacts with UvrC in an incision complex.</text>
</comment>
<comment type="subcellular location">
    <subcellularLocation>
        <location evidence="1">Cytoplasm</location>
    </subcellularLocation>
</comment>
<comment type="domain">
    <text evidence="1">The beta-hairpin motif is involved in DNA binding.</text>
</comment>
<comment type="similarity">
    <text evidence="1">Belongs to the UvrB family.</text>
</comment>
<keyword id="KW-0067">ATP-binding</keyword>
<keyword id="KW-0963">Cytoplasm</keyword>
<keyword id="KW-0227">DNA damage</keyword>
<keyword id="KW-0228">DNA excision</keyword>
<keyword id="KW-0234">DNA repair</keyword>
<keyword id="KW-0267">Excision nuclease</keyword>
<keyword id="KW-0347">Helicase</keyword>
<keyword id="KW-0378">Hydrolase</keyword>
<keyword id="KW-0547">Nucleotide-binding</keyword>
<keyword id="KW-1185">Reference proteome</keyword>
<keyword id="KW-0742">SOS response</keyword>
<sequence>MEEKFVLHSPFAPSGDQPEAIKALVDGIDEKKEHQVLLGVTGSGKTFTIANVIAQLNRPSLIISHNKTLASQLYSELKALFPDNRVEYFVSYFDFYKPEAYIPKSDLYIEKTSKNNKELEAMRMSAINALSIRKDTIVVASVAAIYGESNPKHYRQNFFPIEVGMQIDRKSLLLKLSQIGYERNRMELNKGQFDVKGDSIEICPGYVSDTNIRIDMFGNEIEAITLIDPLSKNVEGSRKNMTLFPATTYTVHENTIQNTVDLIKQELSERIEYFKSHDKLLEAQRIKDRTLNDLDSLLEFGYTSGIENYSRYLDGRAPGQRPYTLFDYLPDDSVIFIDESHLMIPQLHGMHNGDRARKLSLVEYGFRLPSALDNRPLRFEEFAEFKFPKIYISATPGDYELDLTHGEIVTQYIRPTGLLDPIIEIHSRDNQIEDIYDHLKEQIAKKERTLILTTTKKNAEELSLFLQEKKIKSAYIHDRFKIFERNEILKGLRMGKFDVVVGINLLKEGIDLPEVSLICVLNADSTGLMRDTRSLIQIVGRAARNDHGKVIFYANEITSSMRECIEDNLFKRKIQSEYNEKHNIIPKTIVKPIAPPIQNGILSEDHSKYYGEKDLSQMKHNKKFIDQMVRKMTQLAKANKFEEAIEIRDYLIEIGIELDK</sequence>
<accession>B3PLX9</accession>
<feature type="chain" id="PRO_1000099556" description="UvrABC system protein B">
    <location>
        <begin position="1"/>
        <end position="660"/>
    </location>
</feature>
<feature type="domain" description="Helicase ATP-binding" evidence="1">
    <location>
        <begin position="26"/>
        <end position="196"/>
    </location>
</feature>
<feature type="domain" description="Helicase C-terminal" evidence="1">
    <location>
        <begin position="431"/>
        <end position="593"/>
    </location>
</feature>
<feature type="domain" description="UVR" evidence="1">
    <location>
        <begin position="622"/>
        <end position="657"/>
    </location>
</feature>
<feature type="short sequence motif" description="Beta-hairpin">
    <location>
        <begin position="92"/>
        <end position="115"/>
    </location>
</feature>
<feature type="binding site" evidence="1">
    <location>
        <begin position="39"/>
        <end position="46"/>
    </location>
    <ligand>
        <name>ATP</name>
        <dbReference type="ChEBI" id="CHEBI:30616"/>
    </ligand>
</feature>
<organism>
    <name type="scientific">Metamycoplasma arthritidis (strain 158L3-1)</name>
    <name type="common">Mycoplasma arthritidis</name>
    <dbReference type="NCBI Taxonomy" id="243272"/>
    <lineage>
        <taxon>Bacteria</taxon>
        <taxon>Bacillati</taxon>
        <taxon>Mycoplasmatota</taxon>
        <taxon>Mycoplasmoidales</taxon>
        <taxon>Metamycoplasmataceae</taxon>
        <taxon>Metamycoplasma</taxon>
    </lineage>
</organism>